<gene>
    <name type="ordered locus">CBU_1566</name>
</gene>
<evidence type="ECO:0000255" key="1">
    <source>
        <dbReference type="HAMAP-Rule" id="MF_00693"/>
    </source>
</evidence>
<evidence type="ECO:0007829" key="2">
    <source>
        <dbReference type="PDB" id="4F3Q"/>
    </source>
</evidence>
<dbReference type="EMBL" id="AE016828">
    <property type="protein sequence ID" value="AAO91063.1"/>
    <property type="molecule type" value="Genomic_DNA"/>
</dbReference>
<dbReference type="RefSeq" id="NP_820549.1">
    <property type="nucleotide sequence ID" value="NC_002971.4"/>
</dbReference>
<dbReference type="PDB" id="4F3Q">
    <property type="method" value="X-ray"/>
    <property type="resolution" value="2.15 A"/>
    <property type="chains" value="A=1-244"/>
</dbReference>
<dbReference type="PDBsum" id="4F3Q"/>
<dbReference type="SMR" id="Q83BE4"/>
<dbReference type="STRING" id="227377.CBU_1566"/>
<dbReference type="DNASU" id="1209476"/>
<dbReference type="EnsemblBacteria" id="AAO91063">
    <property type="protein sequence ID" value="AAO91063"/>
    <property type="gene ID" value="CBU_1566"/>
</dbReference>
<dbReference type="GeneID" id="1209476"/>
<dbReference type="KEGG" id="cbu:CBU_1566"/>
<dbReference type="PATRIC" id="fig|227377.7.peg.1567"/>
<dbReference type="eggNOG" id="COG0217">
    <property type="taxonomic scope" value="Bacteria"/>
</dbReference>
<dbReference type="HOGENOM" id="CLU_062974_2_2_6"/>
<dbReference type="OrthoDB" id="9781053at2"/>
<dbReference type="EvolutionaryTrace" id="Q83BE4"/>
<dbReference type="Proteomes" id="UP000002671">
    <property type="component" value="Chromosome"/>
</dbReference>
<dbReference type="GO" id="GO:0005829">
    <property type="term" value="C:cytosol"/>
    <property type="evidence" value="ECO:0000318"/>
    <property type="project" value="GO_Central"/>
</dbReference>
<dbReference type="GO" id="GO:0003677">
    <property type="term" value="F:DNA binding"/>
    <property type="evidence" value="ECO:0007669"/>
    <property type="project" value="UniProtKB-UniRule"/>
</dbReference>
<dbReference type="GO" id="GO:0006355">
    <property type="term" value="P:regulation of DNA-templated transcription"/>
    <property type="evidence" value="ECO:0007669"/>
    <property type="project" value="UniProtKB-UniRule"/>
</dbReference>
<dbReference type="FunFam" id="1.10.10.200:FF:000001">
    <property type="entry name" value="Probable transcriptional regulatory protein YebC"/>
    <property type="match status" value="1"/>
</dbReference>
<dbReference type="FunFam" id="3.30.70.980:FF:000002">
    <property type="entry name" value="Probable transcriptional regulatory protein YebC"/>
    <property type="match status" value="1"/>
</dbReference>
<dbReference type="Gene3D" id="1.10.10.200">
    <property type="match status" value="1"/>
</dbReference>
<dbReference type="Gene3D" id="3.30.70.980">
    <property type="match status" value="2"/>
</dbReference>
<dbReference type="HAMAP" id="MF_00693">
    <property type="entry name" value="Transcrip_reg_TACO1"/>
    <property type="match status" value="1"/>
</dbReference>
<dbReference type="InterPro" id="IPR017856">
    <property type="entry name" value="Integrase-like_N"/>
</dbReference>
<dbReference type="InterPro" id="IPR048300">
    <property type="entry name" value="TACO1_YebC-like_2nd/3rd_dom"/>
</dbReference>
<dbReference type="InterPro" id="IPR049083">
    <property type="entry name" value="TACO1_YebC_N"/>
</dbReference>
<dbReference type="InterPro" id="IPR002876">
    <property type="entry name" value="Transcrip_reg_TACO1-like"/>
</dbReference>
<dbReference type="InterPro" id="IPR026564">
    <property type="entry name" value="Transcrip_reg_TACO1-like_dom3"/>
</dbReference>
<dbReference type="InterPro" id="IPR029072">
    <property type="entry name" value="YebC-like"/>
</dbReference>
<dbReference type="NCBIfam" id="NF001030">
    <property type="entry name" value="PRK00110.1"/>
    <property type="match status" value="1"/>
</dbReference>
<dbReference type="NCBIfam" id="NF009044">
    <property type="entry name" value="PRK12378.1"/>
    <property type="match status" value="1"/>
</dbReference>
<dbReference type="NCBIfam" id="TIGR01033">
    <property type="entry name" value="YebC/PmpR family DNA-binding transcriptional regulator"/>
    <property type="match status" value="1"/>
</dbReference>
<dbReference type="PANTHER" id="PTHR12532:SF6">
    <property type="entry name" value="TRANSCRIPTIONAL REGULATORY PROTEIN YEBC-RELATED"/>
    <property type="match status" value="1"/>
</dbReference>
<dbReference type="PANTHER" id="PTHR12532">
    <property type="entry name" value="TRANSLATIONAL ACTIVATOR OF CYTOCHROME C OXIDASE 1"/>
    <property type="match status" value="1"/>
</dbReference>
<dbReference type="Pfam" id="PF20772">
    <property type="entry name" value="TACO1_YebC_N"/>
    <property type="match status" value="1"/>
</dbReference>
<dbReference type="Pfam" id="PF01709">
    <property type="entry name" value="Transcrip_reg"/>
    <property type="match status" value="1"/>
</dbReference>
<dbReference type="SUPFAM" id="SSF75625">
    <property type="entry name" value="YebC-like"/>
    <property type="match status" value="1"/>
</dbReference>
<reference key="1">
    <citation type="journal article" date="2003" name="Proc. Natl. Acad. Sci. U.S.A.">
        <title>Complete genome sequence of the Q-fever pathogen, Coxiella burnetii.</title>
        <authorList>
            <person name="Seshadri R."/>
            <person name="Paulsen I.T."/>
            <person name="Eisen J.A."/>
            <person name="Read T.D."/>
            <person name="Nelson K.E."/>
            <person name="Nelson W.C."/>
            <person name="Ward N.L."/>
            <person name="Tettelin H."/>
            <person name="Davidsen T.M."/>
            <person name="Beanan M.J."/>
            <person name="DeBoy R.T."/>
            <person name="Daugherty S.C."/>
            <person name="Brinkac L.M."/>
            <person name="Madupu R."/>
            <person name="Dodson R.J."/>
            <person name="Khouri H.M."/>
            <person name="Lee K.H."/>
            <person name="Carty H.A."/>
            <person name="Scanlan D."/>
            <person name="Heinzen R.A."/>
            <person name="Thompson H.A."/>
            <person name="Samuel J.E."/>
            <person name="Fraser C.M."/>
            <person name="Heidelberg J.F."/>
        </authorList>
    </citation>
    <scope>NUCLEOTIDE SEQUENCE [LARGE SCALE GENOMIC DNA]</scope>
    <source>
        <strain>RSA 493 / Nine Mile phase I</strain>
    </source>
</reference>
<proteinExistence type="evidence at protein level"/>
<comment type="subcellular location">
    <subcellularLocation>
        <location evidence="1">Cytoplasm</location>
    </subcellularLocation>
</comment>
<comment type="similarity">
    <text evidence="1">Belongs to the TACO1 family.</text>
</comment>
<organism>
    <name type="scientific">Coxiella burnetii (strain RSA 493 / Nine Mile phase I)</name>
    <dbReference type="NCBI Taxonomy" id="227377"/>
    <lineage>
        <taxon>Bacteria</taxon>
        <taxon>Pseudomonadati</taxon>
        <taxon>Pseudomonadota</taxon>
        <taxon>Gammaproteobacteria</taxon>
        <taxon>Legionellales</taxon>
        <taxon>Coxiellaceae</taxon>
        <taxon>Coxiella</taxon>
    </lineage>
</organism>
<keyword id="KW-0002">3D-structure</keyword>
<keyword id="KW-0963">Cytoplasm</keyword>
<keyword id="KW-0238">DNA-binding</keyword>
<keyword id="KW-1185">Reference proteome</keyword>
<keyword id="KW-0804">Transcription</keyword>
<keyword id="KW-0805">Transcription regulation</keyword>
<accession>Q83BE4</accession>
<feature type="chain" id="PRO_0000175795" description="Probable transcriptional regulatory protein CBU_1566">
    <location>
        <begin position="1"/>
        <end position="244"/>
    </location>
</feature>
<feature type="helix" evidence="2">
    <location>
        <begin position="7"/>
        <end position="39"/>
    </location>
</feature>
<feature type="helix" evidence="2">
    <location>
        <begin position="43"/>
        <end position="45"/>
    </location>
</feature>
<feature type="helix" evidence="2">
    <location>
        <begin position="47"/>
        <end position="58"/>
    </location>
</feature>
<feature type="helix" evidence="2">
    <location>
        <begin position="63"/>
        <end position="72"/>
    </location>
</feature>
<feature type="strand" evidence="2">
    <location>
        <begin position="83"/>
        <end position="90"/>
    </location>
</feature>
<feature type="helix" evidence="2">
    <location>
        <begin position="92"/>
        <end position="94"/>
    </location>
</feature>
<feature type="strand" evidence="2">
    <location>
        <begin position="96"/>
        <end position="104"/>
    </location>
</feature>
<feature type="helix" evidence="2">
    <location>
        <begin position="106"/>
        <end position="119"/>
    </location>
</feature>
<feature type="helix" evidence="2">
    <location>
        <begin position="131"/>
        <end position="133"/>
    </location>
</feature>
<feature type="strand" evidence="2">
    <location>
        <begin position="134"/>
        <end position="142"/>
    </location>
</feature>
<feature type="helix" evidence="2">
    <location>
        <begin position="148"/>
        <end position="158"/>
    </location>
</feature>
<feature type="strand" evidence="2">
    <location>
        <begin position="161"/>
        <end position="165"/>
    </location>
</feature>
<feature type="strand" evidence="2">
    <location>
        <begin position="171"/>
        <end position="175"/>
    </location>
</feature>
<feature type="helix" evidence="2">
    <location>
        <begin position="177"/>
        <end position="179"/>
    </location>
</feature>
<feature type="helix" evidence="2">
    <location>
        <begin position="180"/>
        <end position="189"/>
    </location>
</feature>
<feature type="strand" evidence="2">
    <location>
        <begin position="195"/>
        <end position="205"/>
    </location>
</feature>
<feature type="helix" evidence="2">
    <location>
        <begin position="211"/>
        <end position="225"/>
    </location>
</feature>
<feature type="strand" evidence="2">
    <location>
        <begin position="230"/>
        <end position="235"/>
    </location>
</feature>
<feature type="helix" evidence="2">
    <location>
        <begin position="241"/>
        <end position="243"/>
    </location>
</feature>
<sequence length="244" mass="26572">MAGHSKWANIKHAKARQDAKRGKVFTKLIREITVAARLGGEDIDSNPRLRAVVDKAFAANMPKDTITRAIKRGAGSGAGDNLVEVRYEGYGPSGVAVMVDCLTDNKNRTVAEVRHAFSKCDGNLGTEGSVAYLFKQRGLITFPPNSDEEKIMEIALEVGAEDVTTNDDGSIDVTTLPEDFEKIRNAMKAADLNPSHAEVTVLASTEVGLDKDSAEQMLRLTEMLEDLDDVQNVYSNADYPEEVL</sequence>
<protein>
    <recommendedName>
        <fullName evidence="1">Probable transcriptional regulatory protein CBU_1566</fullName>
    </recommendedName>
</protein>
<name>Y1566_COXBU</name>